<organism>
    <name type="scientific">Thermoanaerobacter sp. (strain X514)</name>
    <dbReference type="NCBI Taxonomy" id="399726"/>
    <lineage>
        <taxon>Bacteria</taxon>
        <taxon>Bacillati</taxon>
        <taxon>Bacillota</taxon>
        <taxon>Clostridia</taxon>
        <taxon>Thermoanaerobacterales</taxon>
        <taxon>Thermoanaerobacteraceae</taxon>
        <taxon>Thermoanaerobacter</taxon>
    </lineage>
</organism>
<gene>
    <name evidence="1" type="primary">recF</name>
    <name type="ordered locus">Teth514_0004</name>
</gene>
<accession>B0K0X1</accession>
<dbReference type="EMBL" id="CP000923">
    <property type="protein sequence ID" value="ABY91328.1"/>
    <property type="molecule type" value="Genomic_DNA"/>
</dbReference>
<dbReference type="RefSeq" id="WP_003867406.1">
    <property type="nucleotide sequence ID" value="NC_010320.1"/>
</dbReference>
<dbReference type="SMR" id="B0K0X1"/>
<dbReference type="KEGG" id="tex:Teth514_0004"/>
<dbReference type="HOGENOM" id="CLU_040267_0_1_9"/>
<dbReference type="Proteomes" id="UP000002155">
    <property type="component" value="Chromosome"/>
</dbReference>
<dbReference type="GO" id="GO:0005737">
    <property type="term" value="C:cytoplasm"/>
    <property type="evidence" value="ECO:0007669"/>
    <property type="project" value="UniProtKB-SubCell"/>
</dbReference>
<dbReference type="GO" id="GO:0005524">
    <property type="term" value="F:ATP binding"/>
    <property type="evidence" value="ECO:0007669"/>
    <property type="project" value="UniProtKB-UniRule"/>
</dbReference>
<dbReference type="GO" id="GO:0003697">
    <property type="term" value="F:single-stranded DNA binding"/>
    <property type="evidence" value="ECO:0007669"/>
    <property type="project" value="UniProtKB-UniRule"/>
</dbReference>
<dbReference type="GO" id="GO:0006260">
    <property type="term" value="P:DNA replication"/>
    <property type="evidence" value="ECO:0007669"/>
    <property type="project" value="UniProtKB-UniRule"/>
</dbReference>
<dbReference type="GO" id="GO:0000731">
    <property type="term" value="P:DNA synthesis involved in DNA repair"/>
    <property type="evidence" value="ECO:0007669"/>
    <property type="project" value="TreeGrafter"/>
</dbReference>
<dbReference type="GO" id="GO:0006302">
    <property type="term" value="P:double-strand break repair"/>
    <property type="evidence" value="ECO:0007669"/>
    <property type="project" value="TreeGrafter"/>
</dbReference>
<dbReference type="GO" id="GO:0009432">
    <property type="term" value="P:SOS response"/>
    <property type="evidence" value="ECO:0007669"/>
    <property type="project" value="UniProtKB-UniRule"/>
</dbReference>
<dbReference type="Gene3D" id="3.40.50.300">
    <property type="entry name" value="P-loop containing nucleotide triphosphate hydrolases"/>
    <property type="match status" value="1"/>
</dbReference>
<dbReference type="Gene3D" id="1.20.1050.90">
    <property type="entry name" value="RecF/RecN/SMC, N-terminal domain"/>
    <property type="match status" value="1"/>
</dbReference>
<dbReference type="HAMAP" id="MF_00365">
    <property type="entry name" value="RecF"/>
    <property type="match status" value="1"/>
</dbReference>
<dbReference type="InterPro" id="IPR001238">
    <property type="entry name" value="DNA-binding_RecF"/>
</dbReference>
<dbReference type="InterPro" id="IPR018078">
    <property type="entry name" value="DNA-binding_RecF_CS"/>
</dbReference>
<dbReference type="InterPro" id="IPR027417">
    <property type="entry name" value="P-loop_NTPase"/>
</dbReference>
<dbReference type="InterPro" id="IPR003395">
    <property type="entry name" value="RecF/RecN/SMC_N"/>
</dbReference>
<dbReference type="InterPro" id="IPR042174">
    <property type="entry name" value="RecF_2"/>
</dbReference>
<dbReference type="NCBIfam" id="TIGR00611">
    <property type="entry name" value="recf"/>
    <property type="match status" value="1"/>
</dbReference>
<dbReference type="PANTHER" id="PTHR32182">
    <property type="entry name" value="DNA REPLICATION AND REPAIR PROTEIN RECF"/>
    <property type="match status" value="1"/>
</dbReference>
<dbReference type="PANTHER" id="PTHR32182:SF0">
    <property type="entry name" value="DNA REPLICATION AND REPAIR PROTEIN RECF"/>
    <property type="match status" value="1"/>
</dbReference>
<dbReference type="Pfam" id="PF02463">
    <property type="entry name" value="SMC_N"/>
    <property type="match status" value="1"/>
</dbReference>
<dbReference type="SUPFAM" id="SSF52540">
    <property type="entry name" value="P-loop containing nucleoside triphosphate hydrolases"/>
    <property type="match status" value="1"/>
</dbReference>
<dbReference type="PROSITE" id="PS00617">
    <property type="entry name" value="RECF_1"/>
    <property type="match status" value="1"/>
</dbReference>
<dbReference type="PROSITE" id="PS00618">
    <property type="entry name" value="RECF_2"/>
    <property type="match status" value="1"/>
</dbReference>
<comment type="function">
    <text evidence="1">The RecF protein is involved in DNA metabolism; it is required for DNA replication and normal SOS inducibility. RecF binds preferentially to single-stranded, linear DNA. It also seems to bind ATP.</text>
</comment>
<comment type="subcellular location">
    <subcellularLocation>
        <location evidence="1">Cytoplasm</location>
    </subcellularLocation>
</comment>
<comment type="similarity">
    <text evidence="1">Belongs to the RecF family.</text>
</comment>
<protein>
    <recommendedName>
        <fullName evidence="1">DNA replication and repair protein RecF</fullName>
    </recommendedName>
</protein>
<sequence>MYVKELFVDNFRNLQKQKIEFCEGINIFYGLNAQGKSNLLESIRLLSMGRSFRGSKTTELIKFGEDYFYVKAIICQENNDKKIEFGYKKNENKVIKVNGNKIKSTSELLGQLLTVIFSPEDLNIIKEGPSHRRKYLDSCISVVEKNYLYNLMQYNKILMNRNKLLKSIKEGKSKSILEIFDDQLVEYGAKIIVMRQNYLKNVEINIKKFLLEISNETAEIVYLNSVGLKDASDEEIVKKRLKEKLSKNIDVDLRYFTTQVGPHREDFKIIINGYDSRVYSSQGQQRTAALCLKLSEFEILKKETSEKPVLLLDDVMSELDENRKKYVLERLKGFQTFITHTTKRDLKGDCYFKISNGVVIKE</sequence>
<reference key="1">
    <citation type="submission" date="2008-01" db="EMBL/GenBank/DDBJ databases">
        <title>Complete sequence of Thermoanaerobacter sp. X514.</title>
        <authorList>
            <consortium name="US DOE Joint Genome Institute"/>
            <person name="Copeland A."/>
            <person name="Lucas S."/>
            <person name="Lapidus A."/>
            <person name="Barry K."/>
            <person name="Glavina del Rio T."/>
            <person name="Dalin E."/>
            <person name="Tice H."/>
            <person name="Pitluck S."/>
            <person name="Bruce D."/>
            <person name="Goodwin L."/>
            <person name="Saunders E."/>
            <person name="Brettin T."/>
            <person name="Detter J.C."/>
            <person name="Han C."/>
            <person name="Schmutz J."/>
            <person name="Larimer F."/>
            <person name="Land M."/>
            <person name="Hauser L."/>
            <person name="Kyrpides N."/>
            <person name="Kim E."/>
            <person name="Hemme C."/>
            <person name="Fields M.W."/>
            <person name="He Z."/>
            <person name="Zhou J."/>
            <person name="Richardson P."/>
        </authorList>
    </citation>
    <scope>NUCLEOTIDE SEQUENCE [LARGE SCALE GENOMIC DNA]</scope>
    <source>
        <strain>X514</strain>
    </source>
</reference>
<proteinExistence type="inferred from homology"/>
<feature type="chain" id="PRO_1000121167" description="DNA replication and repair protein RecF">
    <location>
        <begin position="1"/>
        <end position="362"/>
    </location>
</feature>
<feature type="binding site" evidence="1">
    <location>
        <begin position="30"/>
        <end position="37"/>
    </location>
    <ligand>
        <name>ATP</name>
        <dbReference type="ChEBI" id="CHEBI:30616"/>
    </ligand>
</feature>
<keyword id="KW-0067">ATP-binding</keyword>
<keyword id="KW-0963">Cytoplasm</keyword>
<keyword id="KW-0227">DNA damage</keyword>
<keyword id="KW-0234">DNA repair</keyword>
<keyword id="KW-0235">DNA replication</keyword>
<keyword id="KW-0238">DNA-binding</keyword>
<keyword id="KW-0547">Nucleotide-binding</keyword>
<keyword id="KW-0742">SOS response</keyword>
<evidence type="ECO:0000255" key="1">
    <source>
        <dbReference type="HAMAP-Rule" id="MF_00365"/>
    </source>
</evidence>
<name>RECF_THEPX</name>